<organism>
    <name type="scientific">Salmonella agona (strain SL483)</name>
    <dbReference type="NCBI Taxonomy" id="454166"/>
    <lineage>
        <taxon>Bacteria</taxon>
        <taxon>Pseudomonadati</taxon>
        <taxon>Pseudomonadota</taxon>
        <taxon>Gammaproteobacteria</taxon>
        <taxon>Enterobacterales</taxon>
        <taxon>Enterobacteriaceae</taxon>
        <taxon>Salmonella</taxon>
    </lineage>
</organism>
<sequence length="133" mass="15769">MTLPSGHPKSRLIKKFTALGPYIREGQCEDNRFFFDCLAVCVNVKPAPEKREFWGWWMELEAQEKRFTYRYQFGLFDKEGNWTAVPINETEVVERLEYTLREFHEKLRDLLISMELALEPSDDFNDEPVKLSA</sequence>
<keyword id="KW-0010">Activator</keyword>
<keyword id="KW-0175">Coiled coil</keyword>
<keyword id="KW-0963">Cytoplasm</keyword>
<keyword id="KW-0804">Transcription</keyword>
<keyword id="KW-0805">Transcription regulation</keyword>
<comment type="function">
    <text evidence="1">Binds to the sigma-S subunit of RNA polymerase, activating expression of sigma-S-regulated genes. Stimulates RNA polymerase holoenzyme formation and may bind to several other sigma factors, such as sigma-70 and sigma-32.</text>
</comment>
<comment type="subcellular location">
    <subcellularLocation>
        <location evidence="1">Cytoplasm</location>
    </subcellularLocation>
</comment>
<comment type="similarity">
    <text evidence="1">Belongs to the Crl family.</text>
</comment>
<gene>
    <name evidence="1" type="primary">crl</name>
    <name type="ordered locus">SeAg_B0353</name>
</gene>
<reference key="1">
    <citation type="journal article" date="2011" name="J. Bacteriol.">
        <title>Comparative genomics of 28 Salmonella enterica isolates: evidence for CRISPR-mediated adaptive sublineage evolution.</title>
        <authorList>
            <person name="Fricke W.F."/>
            <person name="Mammel M.K."/>
            <person name="McDermott P.F."/>
            <person name="Tartera C."/>
            <person name="White D.G."/>
            <person name="Leclerc J.E."/>
            <person name="Ravel J."/>
            <person name="Cebula T.A."/>
        </authorList>
    </citation>
    <scope>NUCLEOTIDE SEQUENCE [LARGE SCALE GENOMIC DNA]</scope>
    <source>
        <strain>SL483</strain>
    </source>
</reference>
<feature type="chain" id="PRO_1000138143" description="Sigma factor-binding protein Crl">
    <location>
        <begin position="1"/>
        <end position="133"/>
    </location>
</feature>
<feature type="region of interest" description="Essential for activity" evidence="1">
    <location>
        <begin position="99"/>
        <end position="122"/>
    </location>
</feature>
<feature type="coiled-coil region" evidence="1">
    <location>
        <begin position="90"/>
        <end position="111"/>
    </location>
</feature>
<proteinExistence type="inferred from homology"/>
<evidence type="ECO:0000255" key="1">
    <source>
        <dbReference type="HAMAP-Rule" id="MF_01178"/>
    </source>
</evidence>
<dbReference type="EMBL" id="CP001138">
    <property type="protein sequence ID" value="ACH48809.1"/>
    <property type="molecule type" value="Genomic_DNA"/>
</dbReference>
<dbReference type="RefSeq" id="WP_000174693.1">
    <property type="nucleotide sequence ID" value="NC_011149.1"/>
</dbReference>
<dbReference type="SMR" id="B5EWK2"/>
<dbReference type="KEGG" id="sea:SeAg_B0353"/>
<dbReference type="HOGENOM" id="CLU_136773_0_0_6"/>
<dbReference type="Proteomes" id="UP000008819">
    <property type="component" value="Chromosome"/>
</dbReference>
<dbReference type="GO" id="GO:0005737">
    <property type="term" value="C:cytoplasm"/>
    <property type="evidence" value="ECO:0007669"/>
    <property type="project" value="UniProtKB-SubCell"/>
</dbReference>
<dbReference type="GO" id="GO:0045893">
    <property type="term" value="P:positive regulation of DNA-templated transcription"/>
    <property type="evidence" value="ECO:0007669"/>
    <property type="project" value="UniProtKB-UniRule"/>
</dbReference>
<dbReference type="Gene3D" id="3.30.310.230">
    <property type="entry name" value="Sigma factor-binding protein Crl monomer"/>
    <property type="match status" value="1"/>
</dbReference>
<dbReference type="HAMAP" id="MF_01178">
    <property type="entry name" value="Crl"/>
    <property type="match status" value="1"/>
</dbReference>
<dbReference type="InterPro" id="IPR009986">
    <property type="entry name" value="Tscrpt_reg_Crl"/>
</dbReference>
<dbReference type="InterPro" id="IPR038208">
    <property type="entry name" value="Tscrpt_reg_Crl_sf"/>
</dbReference>
<dbReference type="NCBIfam" id="NF008217">
    <property type="entry name" value="PRK10984.1"/>
    <property type="match status" value="1"/>
</dbReference>
<dbReference type="Pfam" id="PF07417">
    <property type="entry name" value="Crl"/>
    <property type="match status" value="1"/>
</dbReference>
<accession>B5EWK2</accession>
<protein>
    <recommendedName>
        <fullName evidence="1">Sigma factor-binding protein Crl</fullName>
    </recommendedName>
</protein>
<name>CRL_SALA4</name>